<proteinExistence type="inferred from homology"/>
<comment type="function">
    <text evidence="1">Isomerase that catalyzes the conversion of deoxy-ribose 1-phosphate (dRib-1-P) and ribose 1-phosphate (Rib-1-P) to deoxy-ribose 5-phosphate (dRib-5-P) and ribose 5-phosphate (Rib-5-P), respectively.</text>
</comment>
<comment type="catalytic activity">
    <reaction evidence="1">
        <text>2-deoxy-alpha-D-ribose 1-phosphate = 2-deoxy-D-ribose 5-phosphate</text>
        <dbReference type="Rhea" id="RHEA:27658"/>
        <dbReference type="ChEBI" id="CHEBI:57259"/>
        <dbReference type="ChEBI" id="CHEBI:62877"/>
        <dbReference type="EC" id="5.4.2.7"/>
    </reaction>
</comment>
<comment type="catalytic activity">
    <reaction evidence="1">
        <text>alpha-D-ribose 1-phosphate = D-ribose 5-phosphate</text>
        <dbReference type="Rhea" id="RHEA:18793"/>
        <dbReference type="ChEBI" id="CHEBI:57720"/>
        <dbReference type="ChEBI" id="CHEBI:78346"/>
        <dbReference type="EC" id="5.4.2.7"/>
    </reaction>
</comment>
<comment type="cofactor">
    <cofactor evidence="1">
        <name>Mn(2+)</name>
        <dbReference type="ChEBI" id="CHEBI:29035"/>
    </cofactor>
    <text evidence="1">Binds 2 manganese ions.</text>
</comment>
<comment type="pathway">
    <text evidence="1">Carbohydrate degradation; 2-deoxy-D-ribose 1-phosphate degradation; D-glyceraldehyde 3-phosphate and acetaldehyde from 2-deoxy-alpha-D-ribose 1-phosphate: step 1/2.</text>
</comment>
<comment type="subcellular location">
    <subcellularLocation>
        <location evidence="1">Cytoplasm</location>
    </subcellularLocation>
</comment>
<comment type="similarity">
    <text evidence="1">Belongs to the phosphopentomutase family.</text>
</comment>
<sequence>MSRALLIVLDSVGIGGAPDAASYGDEGADTVGHIAASCARGAGDRAGLRQGPLRLPHLAALGLGLAAEAATGRMPPGLAPAGSVTGAWGHAVETARGKDTVSGHWEIAGVPVDFDWGRFPATEPSFPPELTQALIAEAGLPGILGDCHASGTAIIEELGAEQVRTGKPICYTSVDSVFQIAAHEEAFGLERLSAVCAVARRLCDPYRIGRVIARPFTGDARRGFVRTANRRDFATPPPSDTLLDRLVAAGRPVVSVGKIGDIFAHRSTGSEVKPAGNEACLDAALAAFAESGLGPGGLVFVNLVDFDTEYGHRRDVPGYAAALERFDARIPEIRAGLAPGDLCVITADHGNDPTWSGTDHTREQVPVLSFGPGLRPGPLGRRDTFADIGAALAAHLGLPPSCGRSWL</sequence>
<gene>
    <name evidence="1" type="primary">deoB</name>
    <name type="ordered locus">Mnod_5134</name>
</gene>
<evidence type="ECO:0000255" key="1">
    <source>
        <dbReference type="HAMAP-Rule" id="MF_00740"/>
    </source>
</evidence>
<feature type="chain" id="PRO_1000148247" description="Phosphopentomutase">
    <location>
        <begin position="1"/>
        <end position="407"/>
    </location>
</feature>
<feature type="binding site" evidence="1">
    <location>
        <position position="10"/>
    </location>
    <ligand>
        <name>Mn(2+)</name>
        <dbReference type="ChEBI" id="CHEBI:29035"/>
        <label>1</label>
    </ligand>
</feature>
<feature type="binding site" evidence="1">
    <location>
        <position position="307"/>
    </location>
    <ligand>
        <name>Mn(2+)</name>
        <dbReference type="ChEBI" id="CHEBI:29035"/>
        <label>2</label>
    </ligand>
</feature>
<feature type="binding site" evidence="1">
    <location>
        <position position="312"/>
    </location>
    <ligand>
        <name>Mn(2+)</name>
        <dbReference type="ChEBI" id="CHEBI:29035"/>
        <label>2</label>
    </ligand>
</feature>
<feature type="binding site" evidence="1">
    <location>
        <position position="348"/>
    </location>
    <ligand>
        <name>Mn(2+)</name>
        <dbReference type="ChEBI" id="CHEBI:29035"/>
        <label>1</label>
    </ligand>
</feature>
<feature type="binding site" evidence="1">
    <location>
        <position position="349"/>
    </location>
    <ligand>
        <name>Mn(2+)</name>
        <dbReference type="ChEBI" id="CHEBI:29035"/>
        <label>1</label>
    </ligand>
</feature>
<feature type="binding site" evidence="1">
    <location>
        <position position="360"/>
    </location>
    <ligand>
        <name>Mn(2+)</name>
        <dbReference type="ChEBI" id="CHEBI:29035"/>
        <label>2</label>
    </ligand>
</feature>
<reference key="1">
    <citation type="submission" date="2009-01" db="EMBL/GenBank/DDBJ databases">
        <title>Complete sequence of chromosome of Methylobacterium nodulans ORS 2060.</title>
        <authorList>
            <consortium name="US DOE Joint Genome Institute"/>
            <person name="Lucas S."/>
            <person name="Copeland A."/>
            <person name="Lapidus A."/>
            <person name="Glavina del Rio T."/>
            <person name="Dalin E."/>
            <person name="Tice H."/>
            <person name="Bruce D."/>
            <person name="Goodwin L."/>
            <person name="Pitluck S."/>
            <person name="Sims D."/>
            <person name="Brettin T."/>
            <person name="Detter J.C."/>
            <person name="Han C."/>
            <person name="Larimer F."/>
            <person name="Land M."/>
            <person name="Hauser L."/>
            <person name="Kyrpides N."/>
            <person name="Ivanova N."/>
            <person name="Marx C.J."/>
            <person name="Richardson P."/>
        </authorList>
    </citation>
    <scope>NUCLEOTIDE SEQUENCE [LARGE SCALE GENOMIC DNA]</scope>
    <source>
        <strain>LMG 21967 / CNCM I-2342 / ORS 2060</strain>
    </source>
</reference>
<name>DEOB_METNO</name>
<organism>
    <name type="scientific">Methylobacterium nodulans (strain LMG 21967 / CNCM I-2342 / ORS 2060)</name>
    <dbReference type="NCBI Taxonomy" id="460265"/>
    <lineage>
        <taxon>Bacteria</taxon>
        <taxon>Pseudomonadati</taxon>
        <taxon>Pseudomonadota</taxon>
        <taxon>Alphaproteobacteria</taxon>
        <taxon>Hyphomicrobiales</taxon>
        <taxon>Methylobacteriaceae</taxon>
        <taxon>Methylobacterium</taxon>
    </lineage>
</organism>
<accession>B8IJW7</accession>
<keyword id="KW-0963">Cytoplasm</keyword>
<keyword id="KW-0413">Isomerase</keyword>
<keyword id="KW-0464">Manganese</keyword>
<keyword id="KW-0479">Metal-binding</keyword>
<keyword id="KW-1185">Reference proteome</keyword>
<protein>
    <recommendedName>
        <fullName evidence="1">Phosphopentomutase</fullName>
        <ecNumber evidence="1">5.4.2.7</ecNumber>
    </recommendedName>
    <alternativeName>
        <fullName evidence="1">Phosphodeoxyribomutase</fullName>
    </alternativeName>
</protein>
<dbReference type="EC" id="5.4.2.7" evidence="1"/>
<dbReference type="EMBL" id="CP001349">
    <property type="protein sequence ID" value="ACL59980.1"/>
    <property type="molecule type" value="Genomic_DNA"/>
</dbReference>
<dbReference type="SMR" id="B8IJW7"/>
<dbReference type="STRING" id="460265.Mnod_5134"/>
<dbReference type="KEGG" id="mno:Mnod_5134"/>
<dbReference type="eggNOG" id="COG1015">
    <property type="taxonomic scope" value="Bacteria"/>
</dbReference>
<dbReference type="HOGENOM" id="CLU_053861_0_0_5"/>
<dbReference type="OrthoDB" id="9769930at2"/>
<dbReference type="UniPathway" id="UPA00002">
    <property type="reaction ID" value="UER00467"/>
</dbReference>
<dbReference type="Proteomes" id="UP000008207">
    <property type="component" value="Chromosome"/>
</dbReference>
<dbReference type="GO" id="GO:0005829">
    <property type="term" value="C:cytosol"/>
    <property type="evidence" value="ECO:0007669"/>
    <property type="project" value="TreeGrafter"/>
</dbReference>
<dbReference type="GO" id="GO:0000287">
    <property type="term" value="F:magnesium ion binding"/>
    <property type="evidence" value="ECO:0007669"/>
    <property type="project" value="InterPro"/>
</dbReference>
<dbReference type="GO" id="GO:0030145">
    <property type="term" value="F:manganese ion binding"/>
    <property type="evidence" value="ECO:0007669"/>
    <property type="project" value="UniProtKB-UniRule"/>
</dbReference>
<dbReference type="GO" id="GO:0008973">
    <property type="term" value="F:phosphopentomutase activity"/>
    <property type="evidence" value="ECO:0007669"/>
    <property type="project" value="UniProtKB-UniRule"/>
</dbReference>
<dbReference type="GO" id="GO:0006018">
    <property type="term" value="P:2-deoxyribose 1-phosphate catabolic process"/>
    <property type="evidence" value="ECO:0007669"/>
    <property type="project" value="UniProtKB-UniRule"/>
</dbReference>
<dbReference type="GO" id="GO:0006015">
    <property type="term" value="P:5-phosphoribose 1-diphosphate biosynthetic process"/>
    <property type="evidence" value="ECO:0007669"/>
    <property type="project" value="UniProtKB-UniPathway"/>
</dbReference>
<dbReference type="GO" id="GO:0043094">
    <property type="term" value="P:metabolic compound salvage"/>
    <property type="evidence" value="ECO:0007669"/>
    <property type="project" value="InterPro"/>
</dbReference>
<dbReference type="GO" id="GO:0009117">
    <property type="term" value="P:nucleotide metabolic process"/>
    <property type="evidence" value="ECO:0007669"/>
    <property type="project" value="InterPro"/>
</dbReference>
<dbReference type="CDD" id="cd16009">
    <property type="entry name" value="PPM"/>
    <property type="match status" value="1"/>
</dbReference>
<dbReference type="Gene3D" id="3.40.720.10">
    <property type="entry name" value="Alkaline Phosphatase, subunit A"/>
    <property type="match status" value="1"/>
</dbReference>
<dbReference type="Gene3D" id="3.30.70.1250">
    <property type="entry name" value="Phosphopentomutase"/>
    <property type="match status" value="1"/>
</dbReference>
<dbReference type="HAMAP" id="MF_00740">
    <property type="entry name" value="Phosphopentomut"/>
    <property type="match status" value="1"/>
</dbReference>
<dbReference type="InterPro" id="IPR017850">
    <property type="entry name" value="Alkaline_phosphatase_core_sf"/>
</dbReference>
<dbReference type="InterPro" id="IPR010045">
    <property type="entry name" value="DeoB"/>
</dbReference>
<dbReference type="InterPro" id="IPR006124">
    <property type="entry name" value="Metalloenzyme"/>
</dbReference>
<dbReference type="InterPro" id="IPR024052">
    <property type="entry name" value="Phosphopentomutase_DeoB_cap_sf"/>
</dbReference>
<dbReference type="NCBIfam" id="TIGR01696">
    <property type="entry name" value="deoB"/>
    <property type="match status" value="1"/>
</dbReference>
<dbReference type="NCBIfam" id="NF003766">
    <property type="entry name" value="PRK05362.1"/>
    <property type="match status" value="1"/>
</dbReference>
<dbReference type="PANTHER" id="PTHR21110">
    <property type="entry name" value="PHOSPHOPENTOMUTASE"/>
    <property type="match status" value="1"/>
</dbReference>
<dbReference type="PANTHER" id="PTHR21110:SF0">
    <property type="entry name" value="PHOSPHOPENTOMUTASE"/>
    <property type="match status" value="1"/>
</dbReference>
<dbReference type="Pfam" id="PF01676">
    <property type="entry name" value="Metalloenzyme"/>
    <property type="match status" value="1"/>
</dbReference>
<dbReference type="PIRSF" id="PIRSF001491">
    <property type="entry name" value="Ppentomutase"/>
    <property type="match status" value="1"/>
</dbReference>
<dbReference type="SUPFAM" id="SSF53649">
    <property type="entry name" value="Alkaline phosphatase-like"/>
    <property type="match status" value="1"/>
</dbReference>
<dbReference type="SUPFAM" id="SSF143856">
    <property type="entry name" value="DeoB insert domain-like"/>
    <property type="match status" value="1"/>
</dbReference>